<gene>
    <name evidence="1" type="primary">coaX</name>
    <name type="ordered locus">Emin_0395</name>
</gene>
<feature type="chain" id="PRO_1000140242" description="Type III pantothenate kinase">
    <location>
        <begin position="1"/>
        <end position="258"/>
    </location>
</feature>
<feature type="active site" description="Proton acceptor" evidence="1">
    <location>
        <position position="109"/>
    </location>
</feature>
<feature type="binding site" evidence="1">
    <location>
        <begin position="6"/>
        <end position="13"/>
    </location>
    <ligand>
        <name>ATP</name>
        <dbReference type="ChEBI" id="CHEBI:30616"/>
    </ligand>
</feature>
<feature type="binding site" evidence="1">
    <location>
        <begin position="107"/>
        <end position="110"/>
    </location>
    <ligand>
        <name>substrate</name>
    </ligand>
</feature>
<feature type="binding site" evidence="1">
    <location>
        <position position="130"/>
    </location>
    <ligand>
        <name>K(+)</name>
        <dbReference type="ChEBI" id="CHEBI:29103"/>
    </ligand>
</feature>
<feature type="binding site" evidence="1">
    <location>
        <position position="133"/>
    </location>
    <ligand>
        <name>ATP</name>
        <dbReference type="ChEBI" id="CHEBI:30616"/>
    </ligand>
</feature>
<feature type="binding site" evidence="1">
    <location>
        <position position="185"/>
    </location>
    <ligand>
        <name>substrate</name>
    </ligand>
</feature>
<sequence length="258" mass="27815">MILTLDVGNTQIFGGVYEGDNLKLTFRKTSKGTLTSDELGLFLRQVLRENGLDPKKIREVGVSSVVPDINRTIHNSCMKYLGLEPFMIGPGIKTGLNIRGRDAANLGADRVADAIAAMNIYPDRNLLIIDFGTANTYDAISKNKEYKGGAIQIGVSTSLNALIQNAALLSKVEILDPGGAASLTTEGQIQAGLYYGNLGAIKEFITRIKKECFGNEESIVIGTGGMGRLFESAKVFDVYLPDLVILGIKIALEQNRSV</sequence>
<reference key="1">
    <citation type="journal article" date="2009" name="Appl. Environ. Microbiol.">
        <title>Genomic analysis of 'Elusimicrobium minutum,' the first cultivated representative of the phylum 'Elusimicrobia' (formerly termite group 1).</title>
        <authorList>
            <person name="Herlemann D.P.R."/>
            <person name="Geissinger O."/>
            <person name="Ikeda-Ohtsubo W."/>
            <person name="Kunin V."/>
            <person name="Sun H."/>
            <person name="Lapidus A."/>
            <person name="Hugenholtz P."/>
            <person name="Brune A."/>
        </authorList>
    </citation>
    <scope>NUCLEOTIDE SEQUENCE [LARGE SCALE GENOMIC DNA]</scope>
    <source>
        <strain>Pei191</strain>
    </source>
</reference>
<evidence type="ECO:0000255" key="1">
    <source>
        <dbReference type="HAMAP-Rule" id="MF_01274"/>
    </source>
</evidence>
<dbReference type="EC" id="2.7.1.33" evidence="1"/>
<dbReference type="EMBL" id="CP001055">
    <property type="protein sequence ID" value="ACC97952.1"/>
    <property type="molecule type" value="Genomic_DNA"/>
</dbReference>
<dbReference type="RefSeq" id="WP_012414567.1">
    <property type="nucleotide sequence ID" value="NC_010644.1"/>
</dbReference>
<dbReference type="SMR" id="B2KBD0"/>
<dbReference type="STRING" id="445932.Emin_0395"/>
<dbReference type="KEGG" id="emi:Emin_0395"/>
<dbReference type="HOGENOM" id="CLU_066627_1_0_0"/>
<dbReference type="OrthoDB" id="9804707at2"/>
<dbReference type="UniPathway" id="UPA00241">
    <property type="reaction ID" value="UER00352"/>
</dbReference>
<dbReference type="Proteomes" id="UP000001029">
    <property type="component" value="Chromosome"/>
</dbReference>
<dbReference type="GO" id="GO:0005737">
    <property type="term" value="C:cytoplasm"/>
    <property type="evidence" value="ECO:0007669"/>
    <property type="project" value="UniProtKB-SubCell"/>
</dbReference>
<dbReference type="GO" id="GO:0005524">
    <property type="term" value="F:ATP binding"/>
    <property type="evidence" value="ECO:0007669"/>
    <property type="project" value="UniProtKB-UniRule"/>
</dbReference>
<dbReference type="GO" id="GO:0046872">
    <property type="term" value="F:metal ion binding"/>
    <property type="evidence" value="ECO:0007669"/>
    <property type="project" value="UniProtKB-KW"/>
</dbReference>
<dbReference type="GO" id="GO:0004594">
    <property type="term" value="F:pantothenate kinase activity"/>
    <property type="evidence" value="ECO:0007669"/>
    <property type="project" value="UniProtKB-UniRule"/>
</dbReference>
<dbReference type="GO" id="GO:0015937">
    <property type="term" value="P:coenzyme A biosynthetic process"/>
    <property type="evidence" value="ECO:0007669"/>
    <property type="project" value="UniProtKB-UniRule"/>
</dbReference>
<dbReference type="CDD" id="cd24015">
    <property type="entry name" value="ASKHA_NBD_PanK-III"/>
    <property type="match status" value="1"/>
</dbReference>
<dbReference type="Gene3D" id="3.30.420.40">
    <property type="match status" value="2"/>
</dbReference>
<dbReference type="HAMAP" id="MF_01274">
    <property type="entry name" value="Pantothen_kinase_3"/>
    <property type="match status" value="1"/>
</dbReference>
<dbReference type="InterPro" id="IPR043129">
    <property type="entry name" value="ATPase_NBD"/>
</dbReference>
<dbReference type="InterPro" id="IPR004619">
    <property type="entry name" value="Type_III_PanK"/>
</dbReference>
<dbReference type="NCBIfam" id="TIGR00671">
    <property type="entry name" value="baf"/>
    <property type="match status" value="1"/>
</dbReference>
<dbReference type="NCBIfam" id="NF009855">
    <property type="entry name" value="PRK13321.1"/>
    <property type="match status" value="1"/>
</dbReference>
<dbReference type="PANTHER" id="PTHR34265">
    <property type="entry name" value="TYPE III PANTOTHENATE KINASE"/>
    <property type="match status" value="1"/>
</dbReference>
<dbReference type="PANTHER" id="PTHR34265:SF1">
    <property type="entry name" value="TYPE III PANTOTHENATE KINASE"/>
    <property type="match status" value="1"/>
</dbReference>
<dbReference type="Pfam" id="PF03309">
    <property type="entry name" value="Pan_kinase"/>
    <property type="match status" value="1"/>
</dbReference>
<dbReference type="SUPFAM" id="SSF53067">
    <property type="entry name" value="Actin-like ATPase domain"/>
    <property type="match status" value="2"/>
</dbReference>
<proteinExistence type="inferred from homology"/>
<accession>B2KBD0</accession>
<name>COAX_ELUMP</name>
<keyword id="KW-0067">ATP-binding</keyword>
<keyword id="KW-0173">Coenzyme A biosynthesis</keyword>
<keyword id="KW-0963">Cytoplasm</keyword>
<keyword id="KW-0418">Kinase</keyword>
<keyword id="KW-0479">Metal-binding</keyword>
<keyword id="KW-0547">Nucleotide-binding</keyword>
<keyword id="KW-0630">Potassium</keyword>
<keyword id="KW-1185">Reference proteome</keyword>
<keyword id="KW-0808">Transferase</keyword>
<comment type="function">
    <text evidence="1">Catalyzes the phosphorylation of pantothenate (Pan), the first step in CoA biosynthesis.</text>
</comment>
<comment type="catalytic activity">
    <reaction evidence="1">
        <text>(R)-pantothenate + ATP = (R)-4'-phosphopantothenate + ADP + H(+)</text>
        <dbReference type="Rhea" id="RHEA:16373"/>
        <dbReference type="ChEBI" id="CHEBI:10986"/>
        <dbReference type="ChEBI" id="CHEBI:15378"/>
        <dbReference type="ChEBI" id="CHEBI:29032"/>
        <dbReference type="ChEBI" id="CHEBI:30616"/>
        <dbReference type="ChEBI" id="CHEBI:456216"/>
        <dbReference type="EC" id="2.7.1.33"/>
    </reaction>
</comment>
<comment type="cofactor">
    <cofactor evidence="1">
        <name>NH4(+)</name>
        <dbReference type="ChEBI" id="CHEBI:28938"/>
    </cofactor>
    <cofactor evidence="1">
        <name>K(+)</name>
        <dbReference type="ChEBI" id="CHEBI:29103"/>
    </cofactor>
    <text evidence="1">A monovalent cation. Ammonium or potassium.</text>
</comment>
<comment type="pathway">
    <text evidence="1">Cofactor biosynthesis; coenzyme A biosynthesis; CoA from (R)-pantothenate: step 1/5.</text>
</comment>
<comment type="subunit">
    <text evidence="1">Homodimer.</text>
</comment>
<comment type="subcellular location">
    <subcellularLocation>
        <location evidence="1">Cytoplasm</location>
    </subcellularLocation>
</comment>
<comment type="similarity">
    <text evidence="1">Belongs to the type III pantothenate kinase family.</text>
</comment>
<organism>
    <name type="scientific">Elusimicrobium minutum (strain Pei191)</name>
    <dbReference type="NCBI Taxonomy" id="445932"/>
    <lineage>
        <taxon>Bacteria</taxon>
        <taxon>Pseudomonadati</taxon>
        <taxon>Elusimicrobiota</taxon>
        <taxon>Elusimicrobia</taxon>
        <taxon>Elusimicrobiales</taxon>
        <taxon>Elusimicrobiaceae</taxon>
        <taxon>Elusimicrobium</taxon>
    </lineage>
</organism>
<protein>
    <recommendedName>
        <fullName evidence="1">Type III pantothenate kinase</fullName>
        <ecNumber evidence="1">2.7.1.33</ecNumber>
    </recommendedName>
    <alternativeName>
        <fullName evidence="1">PanK-III</fullName>
    </alternativeName>
    <alternativeName>
        <fullName evidence="1">Pantothenic acid kinase</fullName>
    </alternativeName>
</protein>